<reference key="1">
    <citation type="journal article" date="2007" name="J. Bacteriol.">
        <title>The complete genome sequence of the lactic acid bacterial paradigm Lactococcus lactis subsp. cremoris MG1363.</title>
        <authorList>
            <person name="Wegmann U."/>
            <person name="O'Connell-Motherway M."/>
            <person name="Zomer A."/>
            <person name="Buist G."/>
            <person name="Shearman C."/>
            <person name="Canchaya C."/>
            <person name="Ventura M."/>
            <person name="Goesmann A."/>
            <person name="Gasson M.J."/>
            <person name="Kuipers O.P."/>
            <person name="van Sinderen D."/>
            <person name="Kok J."/>
        </authorList>
    </citation>
    <scope>NUCLEOTIDE SEQUENCE [LARGE SCALE GENOMIC DNA]</scope>
    <source>
        <strain>MG1363</strain>
    </source>
</reference>
<protein>
    <recommendedName>
        <fullName evidence="1">ATP phosphoribosyltransferase regulatory subunit</fullName>
    </recommendedName>
</protein>
<gene>
    <name evidence="1" type="primary">hisZ</name>
    <name type="ordered locus">llmg_1297</name>
</gene>
<name>HISZ_LACLM</name>
<keyword id="KW-0028">Amino-acid biosynthesis</keyword>
<keyword id="KW-0963">Cytoplasm</keyword>
<keyword id="KW-0368">Histidine biosynthesis</keyword>
<proteinExistence type="inferred from homology"/>
<accession>A2RKS4</accession>
<organism>
    <name type="scientific">Lactococcus lactis subsp. cremoris (strain MG1363)</name>
    <dbReference type="NCBI Taxonomy" id="416870"/>
    <lineage>
        <taxon>Bacteria</taxon>
        <taxon>Bacillati</taxon>
        <taxon>Bacillota</taxon>
        <taxon>Bacilli</taxon>
        <taxon>Lactobacillales</taxon>
        <taxon>Streptococcaceae</taxon>
        <taxon>Lactococcus</taxon>
        <taxon>Lactococcus cremoris subsp. cremoris</taxon>
    </lineage>
</organism>
<comment type="function">
    <text evidence="1">Required for the first step of histidine biosynthesis. May allow the feedback regulation of ATP phosphoribosyltransferase activity by histidine.</text>
</comment>
<comment type="pathway">
    <text evidence="1">Amino-acid biosynthesis; L-histidine biosynthesis; L-histidine from 5-phospho-alpha-D-ribose 1-diphosphate: step 1/9.</text>
</comment>
<comment type="subunit">
    <text evidence="1">Heteromultimer composed of HisG and HisZ subunits.</text>
</comment>
<comment type="subcellular location">
    <subcellularLocation>
        <location evidence="1">Cytoplasm</location>
    </subcellularLocation>
</comment>
<comment type="miscellaneous">
    <text>This function is generally fulfilled by the C-terminal part of HisG, which is missing in some bacteria such as this one.</text>
</comment>
<comment type="similarity">
    <text evidence="1">Belongs to the class-II aminoacyl-tRNA synthetase family. HisZ subfamily.</text>
</comment>
<feature type="chain" id="PRO_1000016265" description="ATP phosphoribosyltransferase regulatory subunit">
    <location>
        <begin position="1"/>
        <end position="318"/>
    </location>
</feature>
<sequence>MKKMNYLLPEESGEMTLSGITTLRKIEQKLRNLFESQNYQEVMPPNFEYVELYTGLDAGFEQEKMFQFINHEGKSIALRYDFTVPLARNFALSELTEARYSYFGKVFRKEKRHKGRRTESYQVGTELLGLSEVTGDQEILGLTFMSLEALTLKNTIVEIGSAAFYKRLCELSGGDAQLFSELLEKKSLSGMKAFVDKHEMIGAPRDLLLALMTTTDLPTMKKLVLATGDEKLSQALEMLEALNLPDKTAICQIHYDFAMVPAMGYYTGLMFQVYVEGVAQATISGGRYDKLLKQFGKTTGSIGFCVHMDNVVKGLNND</sequence>
<evidence type="ECO:0000255" key="1">
    <source>
        <dbReference type="HAMAP-Rule" id="MF_00125"/>
    </source>
</evidence>
<dbReference type="EMBL" id="AM406671">
    <property type="protein sequence ID" value="CAL97890.1"/>
    <property type="molecule type" value="Genomic_DNA"/>
</dbReference>
<dbReference type="RefSeq" id="WP_011835174.1">
    <property type="nucleotide sequence ID" value="NC_009004.1"/>
</dbReference>
<dbReference type="SMR" id="A2RKS4"/>
<dbReference type="STRING" id="416870.llmg_1297"/>
<dbReference type="KEGG" id="llm:llmg_1297"/>
<dbReference type="eggNOG" id="COG3705">
    <property type="taxonomic scope" value="Bacteria"/>
</dbReference>
<dbReference type="HOGENOM" id="CLU_025113_0_0_9"/>
<dbReference type="OrthoDB" id="9800814at2"/>
<dbReference type="PhylomeDB" id="A2RKS4"/>
<dbReference type="UniPathway" id="UPA00031">
    <property type="reaction ID" value="UER00006"/>
</dbReference>
<dbReference type="Proteomes" id="UP000000364">
    <property type="component" value="Chromosome"/>
</dbReference>
<dbReference type="GO" id="GO:0005737">
    <property type="term" value="C:cytoplasm"/>
    <property type="evidence" value="ECO:0007669"/>
    <property type="project" value="UniProtKB-SubCell"/>
</dbReference>
<dbReference type="GO" id="GO:0140096">
    <property type="term" value="F:catalytic activity, acting on a protein"/>
    <property type="evidence" value="ECO:0007669"/>
    <property type="project" value="UniProtKB-ARBA"/>
</dbReference>
<dbReference type="GO" id="GO:0004821">
    <property type="term" value="F:histidine-tRNA ligase activity"/>
    <property type="evidence" value="ECO:0007669"/>
    <property type="project" value="TreeGrafter"/>
</dbReference>
<dbReference type="GO" id="GO:0016740">
    <property type="term" value="F:transferase activity"/>
    <property type="evidence" value="ECO:0007669"/>
    <property type="project" value="UniProtKB-ARBA"/>
</dbReference>
<dbReference type="GO" id="GO:0006427">
    <property type="term" value="P:histidyl-tRNA aminoacylation"/>
    <property type="evidence" value="ECO:0007669"/>
    <property type="project" value="TreeGrafter"/>
</dbReference>
<dbReference type="GO" id="GO:0000105">
    <property type="term" value="P:L-histidine biosynthetic process"/>
    <property type="evidence" value="ECO:0007669"/>
    <property type="project" value="UniProtKB-UniRule"/>
</dbReference>
<dbReference type="CDD" id="cd00773">
    <property type="entry name" value="HisRS-like_core"/>
    <property type="match status" value="1"/>
</dbReference>
<dbReference type="Gene3D" id="3.30.930.10">
    <property type="entry name" value="Bira Bifunctional Protein, Domain 2"/>
    <property type="match status" value="1"/>
</dbReference>
<dbReference type="HAMAP" id="MF_00125">
    <property type="entry name" value="HisZ"/>
    <property type="match status" value="1"/>
</dbReference>
<dbReference type="InterPro" id="IPR006195">
    <property type="entry name" value="aa-tRNA-synth_II"/>
</dbReference>
<dbReference type="InterPro" id="IPR045864">
    <property type="entry name" value="aa-tRNA-synth_II/BPL/LPL"/>
</dbReference>
<dbReference type="InterPro" id="IPR041715">
    <property type="entry name" value="HisRS-like_core"/>
</dbReference>
<dbReference type="InterPro" id="IPR004516">
    <property type="entry name" value="HisRS/HisZ"/>
</dbReference>
<dbReference type="InterPro" id="IPR004517">
    <property type="entry name" value="HisZ"/>
</dbReference>
<dbReference type="PANTHER" id="PTHR43707:SF6">
    <property type="entry name" value="ATP PHOSPHORIBOSYLTRANSFERASE REGULATORY SUBUNIT"/>
    <property type="match status" value="1"/>
</dbReference>
<dbReference type="PANTHER" id="PTHR43707">
    <property type="entry name" value="HISTIDYL-TRNA SYNTHETASE"/>
    <property type="match status" value="1"/>
</dbReference>
<dbReference type="Pfam" id="PF13393">
    <property type="entry name" value="tRNA-synt_His"/>
    <property type="match status" value="1"/>
</dbReference>
<dbReference type="PIRSF" id="PIRSF001549">
    <property type="entry name" value="His-tRNA_synth"/>
    <property type="match status" value="1"/>
</dbReference>
<dbReference type="SUPFAM" id="SSF55681">
    <property type="entry name" value="Class II aaRS and biotin synthetases"/>
    <property type="match status" value="1"/>
</dbReference>
<dbReference type="PROSITE" id="PS50862">
    <property type="entry name" value="AA_TRNA_LIGASE_II"/>
    <property type="match status" value="1"/>
</dbReference>